<reference key="1">
    <citation type="journal article" date="2006" name="Virology">
        <title>Polydnavirus genomes reflect their dual roles as mutualists and pathogens.</title>
        <authorList>
            <person name="Webb B.A."/>
            <person name="Strand M.R."/>
            <person name="Dickey S.E."/>
            <person name="Beck M.H."/>
            <person name="Hilgarth R.S."/>
            <person name="Barney W.E."/>
            <person name="Kadash K."/>
            <person name="Kroemer J.A."/>
            <person name="Lindstrom K.G."/>
            <person name="Rattanadechakul W."/>
            <person name="Shelby K.S."/>
            <person name="Thoetkiattikul H."/>
            <person name="Turnbull M.W."/>
            <person name="Witherell R.A."/>
        </authorList>
    </citation>
    <scope>NUCLEOTIDE SEQUENCE [GENOMIC DNA]</scope>
</reference>
<proteinExistence type="predicted"/>
<feature type="chain" id="PRO_0000405396" description="Uncharacterized protein E2">
    <location>
        <begin position="1"/>
        <end position="108"/>
    </location>
</feature>
<name>YE2_MDBVW</name>
<gene>
    <name type="primary">E2</name>
</gene>
<protein>
    <recommendedName>
        <fullName>Uncharacterized protein E2</fullName>
    </recommendedName>
</protein>
<organism>
    <name type="scientific">Microplitis demolitor bracovirus (isolate Webb)</name>
    <name type="common">MdBV</name>
    <dbReference type="NCBI Taxonomy" id="654919"/>
    <lineage>
        <taxon>Viruses</taxon>
        <taxon>Viruses incertae sedis</taxon>
        <taxon>Polydnaviriformidae</taxon>
        <taxon>Bracoviriform</taxon>
        <taxon>Microplitis demolitor bracovirus</taxon>
    </lineage>
</organism>
<accession>Q5I162</accession>
<sequence length="108" mass="12848">MATLRDKYWFIEWEVVRAHRMEKIPLVVARLILQKEISESCRRHNTSEGIIVSINSVTAESMEHNKVLWFRKLEDRSIVINTTRYHPMRIEYFEAVEVSSLKNGRSSR</sequence>
<organismHost>
    <name type="scientific">Microplitis demolitor</name>
    <name type="common">Parasitoid wasp</name>
    <dbReference type="NCBI Taxonomy" id="69319"/>
</organismHost>
<dbReference type="EMBL" id="AY875680">
    <property type="protein sequence ID" value="AAW51771.1"/>
    <property type="molecule type" value="Genomic_DNA"/>
</dbReference>
<dbReference type="RefSeq" id="YP_239366.1">
    <property type="nucleotide sequence ID" value="NC_007030.2"/>
</dbReference>
<dbReference type="KEGG" id="vg:5075802"/>
<dbReference type="Proteomes" id="UP000008168">
    <property type="component" value="Genome"/>
</dbReference>
<keyword id="KW-1185">Reference proteome</keyword>